<proteinExistence type="inferred from homology"/>
<accession>Q0SYP9</accession>
<sequence>MSRFLICSFALVLLYPAGIDMYLVGLPRIAADLNASEAQLHIAFSVYLAGMAAAMLFAGKMADRSGRKPVAIPGSALFIIASVFCSLAETSTLFLAGRFLQGLGAGCCYVVAFAILRDTLDDRRRAKVLSLLNGITCIIPVLAPVLGHLIMLKFPWQSLFWAMAMMGIAVLMLSLFILKETRPASPAASDKPRENSESLLNRFFLSRVVITTLSVSVILTFVNTSPVLLMEIMGFERGEYATIMALTAGVSMTFSFSTPFALGIFKPRTLMITSQVLFLAAGITLAVSPSHAVSLFGITLICAGFSVGFGVAMSQALGPFSLRAGVASSTLGIAQVCGSSLWIWLAAVVGIGAWNMLIGILIACSIVSLLLIMFVAPGRPVAAHEEIHHHA</sequence>
<evidence type="ECO:0000255" key="1"/>
<evidence type="ECO:0000255" key="2">
    <source>
        <dbReference type="HAMAP-Rule" id="MF_01530"/>
    </source>
</evidence>
<feature type="chain" id="PRO_0000282004" description="Multidrug resistance protein MdtL">
    <location>
        <begin position="1"/>
        <end position="391"/>
    </location>
</feature>
<feature type="topological domain" description="Cytoplasmic" evidence="1">
    <location>
        <begin position="1"/>
        <end position="3"/>
    </location>
</feature>
<feature type="transmembrane region" description="Helical" evidence="2">
    <location>
        <begin position="4"/>
        <end position="24"/>
    </location>
</feature>
<feature type="topological domain" description="Periplasmic" evidence="1">
    <location>
        <begin position="25"/>
        <end position="37"/>
    </location>
</feature>
<feature type="transmembrane region" description="Helical" evidence="2">
    <location>
        <begin position="38"/>
        <end position="58"/>
    </location>
</feature>
<feature type="topological domain" description="Cytoplasmic" evidence="1">
    <location>
        <begin position="59"/>
        <end position="75"/>
    </location>
</feature>
<feature type="transmembrane region" description="Helical" evidence="2">
    <location>
        <begin position="76"/>
        <end position="96"/>
    </location>
</feature>
<feature type="topological domain" description="Periplasmic" evidence="1">
    <location>
        <begin position="97"/>
        <end position="98"/>
    </location>
</feature>
<feature type="transmembrane region" description="Helical" evidence="2">
    <location>
        <begin position="99"/>
        <end position="119"/>
    </location>
</feature>
<feature type="topological domain" description="Cytoplasmic" evidence="1">
    <location>
        <begin position="120"/>
        <end position="130"/>
    </location>
</feature>
<feature type="transmembrane region" description="Helical" evidence="2">
    <location>
        <begin position="131"/>
        <end position="151"/>
    </location>
</feature>
<feature type="topological domain" description="Periplasmic" evidence="1">
    <location>
        <begin position="152"/>
        <end position="157"/>
    </location>
</feature>
<feature type="transmembrane region" description="Helical" evidence="2">
    <location>
        <begin position="158"/>
        <end position="178"/>
    </location>
</feature>
<feature type="topological domain" description="Cytoplasmic" evidence="1">
    <location>
        <begin position="179"/>
        <end position="202"/>
    </location>
</feature>
<feature type="transmembrane region" description="Helical" evidence="2">
    <location>
        <begin position="203"/>
        <end position="222"/>
    </location>
</feature>
<feature type="topological domain" description="Periplasmic" evidence="1">
    <location>
        <begin position="223"/>
        <end position="244"/>
    </location>
</feature>
<feature type="transmembrane region" description="Helical" evidence="2">
    <location>
        <begin position="245"/>
        <end position="265"/>
    </location>
</feature>
<feature type="topological domain" description="Cytoplasmic" evidence="1">
    <location>
        <begin position="266"/>
        <end position="268"/>
    </location>
</feature>
<feature type="transmembrane region" description="Helical" evidence="2">
    <location>
        <begin position="269"/>
        <end position="289"/>
    </location>
</feature>
<feature type="topological domain" description="Periplasmic" evidence="1">
    <location>
        <begin position="290"/>
        <end position="292"/>
    </location>
</feature>
<feature type="transmembrane region" description="Helical" evidence="2">
    <location>
        <begin position="293"/>
        <end position="313"/>
    </location>
</feature>
<feature type="topological domain" description="Cytoplasmic" evidence="1">
    <location>
        <begin position="314"/>
        <end position="330"/>
    </location>
</feature>
<feature type="transmembrane region" description="Helical" evidence="2">
    <location>
        <begin position="331"/>
        <end position="351"/>
    </location>
</feature>
<feature type="topological domain" description="Periplasmic" evidence="1">
    <location>
        <begin position="352"/>
        <end position="355"/>
    </location>
</feature>
<feature type="transmembrane region" description="Helical" evidence="2">
    <location>
        <begin position="356"/>
        <end position="376"/>
    </location>
</feature>
<feature type="topological domain" description="Cytoplasmic" evidence="1">
    <location>
        <begin position="377"/>
        <end position="391"/>
    </location>
</feature>
<keyword id="KW-0997">Cell inner membrane</keyword>
<keyword id="KW-1003">Cell membrane</keyword>
<keyword id="KW-0472">Membrane</keyword>
<keyword id="KW-0812">Transmembrane</keyword>
<keyword id="KW-1133">Transmembrane helix</keyword>
<keyword id="KW-0813">Transport</keyword>
<reference key="1">
    <citation type="journal article" date="2006" name="BMC Genomics">
        <title>Complete genome sequence of Shigella flexneri 5b and comparison with Shigella flexneri 2a.</title>
        <authorList>
            <person name="Nie H."/>
            <person name="Yang F."/>
            <person name="Zhang X."/>
            <person name="Yang J."/>
            <person name="Chen L."/>
            <person name="Wang J."/>
            <person name="Xiong Z."/>
            <person name="Peng J."/>
            <person name="Sun L."/>
            <person name="Dong J."/>
            <person name="Xue Y."/>
            <person name="Xu X."/>
            <person name="Chen S."/>
            <person name="Yao Z."/>
            <person name="Shen Y."/>
            <person name="Jin Q."/>
        </authorList>
    </citation>
    <scope>NUCLEOTIDE SEQUENCE [LARGE SCALE GENOMIC DNA]</scope>
    <source>
        <strain>8401</strain>
    </source>
</reference>
<dbReference type="EMBL" id="CP000266">
    <property type="protein sequence ID" value="ABF05816.1"/>
    <property type="molecule type" value="Genomic_DNA"/>
</dbReference>
<dbReference type="RefSeq" id="WP_000085961.1">
    <property type="nucleotide sequence ID" value="NC_008258.1"/>
</dbReference>
<dbReference type="SMR" id="Q0SYP9"/>
<dbReference type="KEGG" id="sfv:SFV_3803"/>
<dbReference type="HOGENOM" id="CLU_001265_47_1_6"/>
<dbReference type="Proteomes" id="UP000000659">
    <property type="component" value="Chromosome"/>
</dbReference>
<dbReference type="GO" id="GO:0005886">
    <property type="term" value="C:plasma membrane"/>
    <property type="evidence" value="ECO:0007669"/>
    <property type="project" value="UniProtKB-SubCell"/>
</dbReference>
<dbReference type="GO" id="GO:0022857">
    <property type="term" value="F:transmembrane transporter activity"/>
    <property type="evidence" value="ECO:0007669"/>
    <property type="project" value="UniProtKB-UniRule"/>
</dbReference>
<dbReference type="CDD" id="cd17320">
    <property type="entry name" value="MFS_MdfA_MDR_like"/>
    <property type="match status" value="1"/>
</dbReference>
<dbReference type="FunFam" id="1.20.1720.10:FF:000003">
    <property type="entry name" value="Multidrug resistance protein MdtL"/>
    <property type="match status" value="1"/>
</dbReference>
<dbReference type="Gene3D" id="1.20.1720.10">
    <property type="entry name" value="Multidrug resistance protein D"/>
    <property type="match status" value="1"/>
</dbReference>
<dbReference type="HAMAP" id="MF_01530">
    <property type="entry name" value="MFS_MdtL"/>
    <property type="match status" value="1"/>
</dbReference>
<dbReference type="InterPro" id="IPR011701">
    <property type="entry name" value="MFS"/>
</dbReference>
<dbReference type="InterPro" id="IPR020846">
    <property type="entry name" value="MFS_dom"/>
</dbReference>
<dbReference type="InterPro" id="IPR050189">
    <property type="entry name" value="MFS_Efflux_Transporters"/>
</dbReference>
<dbReference type="InterPro" id="IPR036259">
    <property type="entry name" value="MFS_trans_sf"/>
</dbReference>
<dbReference type="InterPro" id="IPR023697">
    <property type="entry name" value="Multidrug-R_MdtL"/>
</dbReference>
<dbReference type="NCBIfam" id="NF007782">
    <property type="entry name" value="PRK10473.1"/>
    <property type="match status" value="1"/>
</dbReference>
<dbReference type="PANTHER" id="PTHR43124:SF3">
    <property type="entry name" value="CHLORAMPHENICOL EFFLUX PUMP RV0191"/>
    <property type="match status" value="1"/>
</dbReference>
<dbReference type="PANTHER" id="PTHR43124">
    <property type="entry name" value="PURINE EFFLUX PUMP PBUE"/>
    <property type="match status" value="1"/>
</dbReference>
<dbReference type="Pfam" id="PF07690">
    <property type="entry name" value="MFS_1"/>
    <property type="match status" value="1"/>
</dbReference>
<dbReference type="SUPFAM" id="SSF103473">
    <property type="entry name" value="MFS general substrate transporter"/>
    <property type="match status" value="1"/>
</dbReference>
<dbReference type="PROSITE" id="PS50850">
    <property type="entry name" value="MFS"/>
    <property type="match status" value="1"/>
</dbReference>
<name>MDTL_SHIF8</name>
<organism>
    <name type="scientific">Shigella flexneri serotype 5b (strain 8401)</name>
    <dbReference type="NCBI Taxonomy" id="373384"/>
    <lineage>
        <taxon>Bacteria</taxon>
        <taxon>Pseudomonadati</taxon>
        <taxon>Pseudomonadota</taxon>
        <taxon>Gammaproteobacteria</taxon>
        <taxon>Enterobacterales</taxon>
        <taxon>Enterobacteriaceae</taxon>
        <taxon>Shigella</taxon>
    </lineage>
</organism>
<protein>
    <recommendedName>
        <fullName evidence="2">Multidrug resistance protein MdtL</fullName>
    </recommendedName>
</protein>
<comment type="subcellular location">
    <subcellularLocation>
        <location evidence="2">Cell inner membrane</location>
        <topology evidence="2">Multi-pass membrane protein</topology>
    </subcellularLocation>
</comment>
<comment type="similarity">
    <text evidence="2">Belongs to the major facilitator superfamily. DHA1 family. MdtL (TC 2.A.1.2.22) subfamily.</text>
</comment>
<gene>
    <name evidence="2" type="primary">mdtL</name>
    <name type="ordered locus">SFV_3803</name>
</gene>